<keyword id="KW-0143">Chaperone</keyword>
<keyword id="KW-0963">Cytoplasm</keyword>
<keyword id="KW-1185">Reference proteome</keyword>
<keyword id="KW-0690">Ribosome biogenesis</keyword>
<keyword id="KW-0698">rRNA processing</keyword>
<reference key="1">
    <citation type="journal article" date="2001" name="Nature">
        <title>Genome sequence of Yersinia pestis, the causative agent of plague.</title>
        <authorList>
            <person name="Parkhill J."/>
            <person name="Wren B.W."/>
            <person name="Thomson N.R."/>
            <person name="Titball R.W."/>
            <person name="Holden M.T.G."/>
            <person name="Prentice M.B."/>
            <person name="Sebaihia M."/>
            <person name="James K.D."/>
            <person name="Churcher C.M."/>
            <person name="Mungall K.L."/>
            <person name="Baker S."/>
            <person name="Basham D."/>
            <person name="Bentley S.D."/>
            <person name="Brooks K."/>
            <person name="Cerdeno-Tarraga A.-M."/>
            <person name="Chillingworth T."/>
            <person name="Cronin A."/>
            <person name="Davies R.M."/>
            <person name="Davis P."/>
            <person name="Dougan G."/>
            <person name="Feltwell T."/>
            <person name="Hamlin N."/>
            <person name="Holroyd S."/>
            <person name="Jagels K."/>
            <person name="Karlyshev A.V."/>
            <person name="Leather S."/>
            <person name="Moule S."/>
            <person name="Oyston P.C.F."/>
            <person name="Quail M.A."/>
            <person name="Rutherford K.M."/>
            <person name="Simmonds M."/>
            <person name="Skelton J."/>
            <person name="Stevens K."/>
            <person name="Whitehead S."/>
            <person name="Barrell B.G."/>
        </authorList>
    </citation>
    <scope>NUCLEOTIDE SEQUENCE [LARGE SCALE GENOMIC DNA]</scope>
    <source>
        <strain>CO-92 / Biovar Orientalis</strain>
    </source>
</reference>
<reference key="2">
    <citation type="journal article" date="2002" name="J. Bacteriol.">
        <title>Genome sequence of Yersinia pestis KIM.</title>
        <authorList>
            <person name="Deng W."/>
            <person name="Burland V."/>
            <person name="Plunkett G. III"/>
            <person name="Boutin A."/>
            <person name="Mayhew G.F."/>
            <person name="Liss P."/>
            <person name="Perna N.T."/>
            <person name="Rose D.J."/>
            <person name="Mau B."/>
            <person name="Zhou S."/>
            <person name="Schwartz D.C."/>
            <person name="Fetherston J.D."/>
            <person name="Lindler L.E."/>
            <person name="Brubaker R.R."/>
            <person name="Plano G.V."/>
            <person name="Straley S.C."/>
            <person name="McDonough K.A."/>
            <person name="Nilles M.L."/>
            <person name="Matson J.S."/>
            <person name="Blattner F.R."/>
            <person name="Perry R.D."/>
        </authorList>
    </citation>
    <scope>NUCLEOTIDE SEQUENCE [LARGE SCALE GENOMIC DNA]</scope>
    <source>
        <strain>KIM10+ / Biovar Mediaevalis</strain>
    </source>
</reference>
<reference key="3">
    <citation type="journal article" date="2004" name="DNA Res.">
        <title>Complete genome sequence of Yersinia pestis strain 91001, an isolate avirulent to humans.</title>
        <authorList>
            <person name="Song Y."/>
            <person name="Tong Z."/>
            <person name="Wang J."/>
            <person name="Wang L."/>
            <person name="Guo Z."/>
            <person name="Han Y."/>
            <person name="Zhang J."/>
            <person name="Pei D."/>
            <person name="Zhou D."/>
            <person name="Qin H."/>
            <person name="Pang X."/>
            <person name="Han Y."/>
            <person name="Zhai J."/>
            <person name="Li M."/>
            <person name="Cui B."/>
            <person name="Qi Z."/>
            <person name="Jin L."/>
            <person name="Dai R."/>
            <person name="Chen F."/>
            <person name="Li S."/>
            <person name="Ye C."/>
            <person name="Du Z."/>
            <person name="Lin W."/>
            <person name="Wang J."/>
            <person name="Yu J."/>
            <person name="Yang H."/>
            <person name="Wang J."/>
            <person name="Huang P."/>
            <person name="Yang R."/>
        </authorList>
    </citation>
    <scope>NUCLEOTIDE SEQUENCE [LARGE SCALE GENOMIC DNA]</scope>
    <source>
        <strain>91001 / Biovar Mediaevalis</strain>
    </source>
</reference>
<protein>
    <recommendedName>
        <fullName evidence="1">Ribosome maturation factor RimM</fullName>
    </recommendedName>
</protein>
<dbReference type="EMBL" id="AL590842">
    <property type="protein sequence ID" value="CAL21885.1"/>
    <property type="molecule type" value="Genomic_DNA"/>
</dbReference>
<dbReference type="EMBL" id="AE009952">
    <property type="protein sequence ID" value="AAM84479.1"/>
    <property type="status" value="ALT_INIT"/>
    <property type="molecule type" value="Genomic_DNA"/>
</dbReference>
<dbReference type="EMBL" id="AE017042">
    <property type="protein sequence ID" value="AAS60665.1"/>
    <property type="status" value="ALT_INIT"/>
    <property type="molecule type" value="Genomic_DNA"/>
</dbReference>
<dbReference type="PIR" id="AB0400">
    <property type="entry name" value="AB0400"/>
</dbReference>
<dbReference type="RefSeq" id="WP_002209459.1">
    <property type="nucleotide sequence ID" value="NZ_WUCM01000135.1"/>
</dbReference>
<dbReference type="RefSeq" id="YP_002348190.1">
    <property type="nucleotide sequence ID" value="NC_003143.1"/>
</dbReference>
<dbReference type="SMR" id="Q8ZBU8"/>
<dbReference type="STRING" id="214092.YPO3294"/>
<dbReference type="PaxDb" id="214092-YPO3294"/>
<dbReference type="EnsemblBacteria" id="AAS60665">
    <property type="protein sequence ID" value="AAS60665"/>
    <property type="gene ID" value="YP_0392"/>
</dbReference>
<dbReference type="GeneID" id="57975423"/>
<dbReference type="KEGG" id="ype:YPO3294"/>
<dbReference type="KEGG" id="ypk:y0895"/>
<dbReference type="KEGG" id="ypm:YP_0392"/>
<dbReference type="PATRIC" id="fig|1028802.3.peg.307"/>
<dbReference type="eggNOG" id="COG0806">
    <property type="taxonomic scope" value="Bacteria"/>
</dbReference>
<dbReference type="HOGENOM" id="CLU_077636_1_0_6"/>
<dbReference type="OMA" id="IKVDWDP"/>
<dbReference type="OrthoDB" id="9783509at2"/>
<dbReference type="Proteomes" id="UP000000815">
    <property type="component" value="Chromosome"/>
</dbReference>
<dbReference type="Proteomes" id="UP000001019">
    <property type="component" value="Chromosome"/>
</dbReference>
<dbReference type="Proteomes" id="UP000002490">
    <property type="component" value="Chromosome"/>
</dbReference>
<dbReference type="GO" id="GO:0005829">
    <property type="term" value="C:cytosol"/>
    <property type="evidence" value="ECO:0000318"/>
    <property type="project" value="GO_Central"/>
</dbReference>
<dbReference type="GO" id="GO:0005840">
    <property type="term" value="C:ribosome"/>
    <property type="evidence" value="ECO:0007669"/>
    <property type="project" value="InterPro"/>
</dbReference>
<dbReference type="GO" id="GO:0043022">
    <property type="term" value="F:ribosome binding"/>
    <property type="evidence" value="ECO:0007669"/>
    <property type="project" value="InterPro"/>
</dbReference>
<dbReference type="GO" id="GO:0030490">
    <property type="term" value="P:maturation of SSU-rRNA"/>
    <property type="evidence" value="ECO:0000318"/>
    <property type="project" value="GO_Central"/>
</dbReference>
<dbReference type="FunFam" id="2.30.30.240:FF:000001">
    <property type="entry name" value="Ribosome maturation factor RimM"/>
    <property type="match status" value="1"/>
</dbReference>
<dbReference type="FunFam" id="2.40.30.60:FF:000001">
    <property type="entry name" value="Ribosome maturation factor RimM"/>
    <property type="match status" value="1"/>
</dbReference>
<dbReference type="Gene3D" id="2.30.30.240">
    <property type="entry name" value="PRC-barrel domain"/>
    <property type="match status" value="1"/>
</dbReference>
<dbReference type="Gene3D" id="2.40.30.60">
    <property type="entry name" value="RimM"/>
    <property type="match status" value="1"/>
</dbReference>
<dbReference type="HAMAP" id="MF_00014">
    <property type="entry name" value="Ribosome_mat_RimM"/>
    <property type="match status" value="1"/>
</dbReference>
<dbReference type="InterPro" id="IPR011033">
    <property type="entry name" value="PRC_barrel-like_sf"/>
</dbReference>
<dbReference type="InterPro" id="IPR056792">
    <property type="entry name" value="PRC_RimM"/>
</dbReference>
<dbReference type="InterPro" id="IPR011961">
    <property type="entry name" value="RimM"/>
</dbReference>
<dbReference type="InterPro" id="IPR002676">
    <property type="entry name" value="RimM_N"/>
</dbReference>
<dbReference type="InterPro" id="IPR036976">
    <property type="entry name" value="RimM_N_sf"/>
</dbReference>
<dbReference type="InterPro" id="IPR009000">
    <property type="entry name" value="Transl_B-barrel_sf"/>
</dbReference>
<dbReference type="NCBIfam" id="TIGR02273">
    <property type="entry name" value="16S_RimM"/>
    <property type="match status" value="1"/>
</dbReference>
<dbReference type="PANTHER" id="PTHR33692">
    <property type="entry name" value="RIBOSOME MATURATION FACTOR RIMM"/>
    <property type="match status" value="1"/>
</dbReference>
<dbReference type="PANTHER" id="PTHR33692:SF1">
    <property type="entry name" value="RIBOSOME MATURATION FACTOR RIMM"/>
    <property type="match status" value="1"/>
</dbReference>
<dbReference type="Pfam" id="PF24986">
    <property type="entry name" value="PRC_RimM"/>
    <property type="match status" value="1"/>
</dbReference>
<dbReference type="Pfam" id="PF01782">
    <property type="entry name" value="RimM"/>
    <property type="match status" value="1"/>
</dbReference>
<dbReference type="SUPFAM" id="SSF50346">
    <property type="entry name" value="PRC-barrel domain"/>
    <property type="match status" value="1"/>
</dbReference>
<dbReference type="SUPFAM" id="SSF50447">
    <property type="entry name" value="Translation proteins"/>
    <property type="match status" value="1"/>
</dbReference>
<feature type="chain" id="PRO_0000163395" description="Ribosome maturation factor RimM">
    <location>
        <begin position="1"/>
        <end position="182"/>
    </location>
</feature>
<feature type="domain" description="PRC barrel" evidence="1">
    <location>
        <begin position="103"/>
        <end position="182"/>
    </location>
</feature>
<proteinExistence type="inferred from homology"/>
<name>RIMM_YERPE</name>
<sequence>MSKQLNPAVPDQPIVLGKMGSTYGIRGWLRVFSSTENAESIFDYQPWFIQQAGKWQHVELEDWKRHSQDLIIKVKGVDDREAANLLTNCEIIVDSTQLPALEEDDYYWKDLMGCQVVTTTGYELGKIIDMMETGSNDVMVVKANLKDAFGMKERLVPFLHGQVIKKVDLTAQRVEVDWDPGF</sequence>
<organism>
    <name type="scientific">Yersinia pestis</name>
    <dbReference type="NCBI Taxonomy" id="632"/>
    <lineage>
        <taxon>Bacteria</taxon>
        <taxon>Pseudomonadati</taxon>
        <taxon>Pseudomonadota</taxon>
        <taxon>Gammaproteobacteria</taxon>
        <taxon>Enterobacterales</taxon>
        <taxon>Yersiniaceae</taxon>
        <taxon>Yersinia</taxon>
    </lineage>
</organism>
<evidence type="ECO:0000255" key="1">
    <source>
        <dbReference type="HAMAP-Rule" id="MF_00014"/>
    </source>
</evidence>
<evidence type="ECO:0000305" key="2"/>
<accession>Q8ZBU8</accession>
<accession>Q0WBZ8</accession>
<gene>
    <name evidence="1" type="primary">rimM</name>
    <name type="ordered locus">YPO3294</name>
    <name type="ordered locus">y0895</name>
    <name type="ordered locus">YP_0392</name>
</gene>
<comment type="function">
    <text evidence="1">An accessory protein needed during the final step in the assembly of 30S ribosomal subunit, possibly for assembly of the head region. Essential for efficient processing of 16S rRNA. May be needed both before and after RbfA during the maturation of 16S rRNA. It has affinity for free ribosomal 30S subunits but not for 70S ribosomes.</text>
</comment>
<comment type="subunit">
    <text evidence="1">Binds ribosomal protein uS19.</text>
</comment>
<comment type="subcellular location">
    <subcellularLocation>
        <location evidence="1">Cytoplasm</location>
    </subcellularLocation>
</comment>
<comment type="domain">
    <text evidence="1">The PRC barrel domain binds ribosomal protein uS19.</text>
</comment>
<comment type="similarity">
    <text evidence="1">Belongs to the RimM family.</text>
</comment>
<comment type="sequence caution" evidence="2">
    <conflict type="erroneous initiation">
        <sequence resource="EMBL-CDS" id="AAM84479"/>
    </conflict>
</comment>
<comment type="sequence caution" evidence="2">
    <conflict type="erroneous initiation">
        <sequence resource="EMBL-CDS" id="AAS60665"/>
    </conflict>
</comment>